<gene>
    <name evidence="1" type="primary">ihfB</name>
    <name evidence="1" type="synonym">himD</name>
    <name type="ordered locus">ECH74115_1073</name>
</gene>
<comment type="function">
    <text evidence="1">This protein is one of the two subunits of integration host factor, a specific DNA-binding protein that functions in genetic recombination as well as in transcriptional and translational control.</text>
</comment>
<comment type="subunit">
    <text evidence="1">Heterodimer of an alpha and a beta chain.</text>
</comment>
<comment type="similarity">
    <text evidence="1">Belongs to the bacterial histone-like protein family.</text>
</comment>
<keyword id="KW-0233">DNA recombination</keyword>
<keyword id="KW-0238">DNA-binding</keyword>
<keyword id="KW-0804">Transcription</keyword>
<keyword id="KW-0805">Transcription regulation</keyword>
<keyword id="KW-0810">Translation regulation</keyword>
<protein>
    <recommendedName>
        <fullName evidence="1">Integration host factor subunit beta</fullName>
        <shortName evidence="1">IHF-beta</shortName>
    </recommendedName>
</protein>
<evidence type="ECO:0000255" key="1">
    <source>
        <dbReference type="HAMAP-Rule" id="MF_00381"/>
    </source>
</evidence>
<name>IHFB_ECO5E</name>
<organism>
    <name type="scientific">Escherichia coli O157:H7 (strain EC4115 / EHEC)</name>
    <dbReference type="NCBI Taxonomy" id="444450"/>
    <lineage>
        <taxon>Bacteria</taxon>
        <taxon>Pseudomonadati</taxon>
        <taxon>Pseudomonadota</taxon>
        <taxon>Gammaproteobacteria</taxon>
        <taxon>Enterobacterales</taxon>
        <taxon>Enterobacteriaceae</taxon>
        <taxon>Escherichia</taxon>
    </lineage>
</organism>
<accession>B5YT46</accession>
<proteinExistence type="inferred from homology"/>
<feature type="chain" id="PRO_1000122210" description="Integration host factor subunit beta">
    <location>
        <begin position="1"/>
        <end position="94"/>
    </location>
</feature>
<reference key="1">
    <citation type="journal article" date="2011" name="Proc. Natl. Acad. Sci. U.S.A.">
        <title>Genomic anatomy of Escherichia coli O157:H7 outbreaks.</title>
        <authorList>
            <person name="Eppinger M."/>
            <person name="Mammel M.K."/>
            <person name="Leclerc J.E."/>
            <person name="Ravel J."/>
            <person name="Cebula T.A."/>
        </authorList>
    </citation>
    <scope>NUCLEOTIDE SEQUENCE [LARGE SCALE GENOMIC DNA]</scope>
    <source>
        <strain>EC4115 / EHEC</strain>
    </source>
</reference>
<dbReference type="EMBL" id="CP001164">
    <property type="protein sequence ID" value="ACI35395.1"/>
    <property type="molecule type" value="Genomic_DNA"/>
</dbReference>
<dbReference type="RefSeq" id="WP_000167336.1">
    <property type="nucleotide sequence ID" value="NC_011353.1"/>
</dbReference>
<dbReference type="SMR" id="B5YT46"/>
<dbReference type="GeneID" id="93776505"/>
<dbReference type="KEGG" id="ecf:ECH74115_1073"/>
<dbReference type="HOGENOM" id="CLU_105066_2_0_6"/>
<dbReference type="GO" id="GO:0005694">
    <property type="term" value="C:chromosome"/>
    <property type="evidence" value="ECO:0007669"/>
    <property type="project" value="InterPro"/>
</dbReference>
<dbReference type="GO" id="GO:0005829">
    <property type="term" value="C:cytosol"/>
    <property type="evidence" value="ECO:0007669"/>
    <property type="project" value="TreeGrafter"/>
</dbReference>
<dbReference type="GO" id="GO:0003677">
    <property type="term" value="F:DNA binding"/>
    <property type="evidence" value="ECO:0007669"/>
    <property type="project" value="UniProtKB-UniRule"/>
</dbReference>
<dbReference type="GO" id="GO:0030527">
    <property type="term" value="F:structural constituent of chromatin"/>
    <property type="evidence" value="ECO:0007669"/>
    <property type="project" value="InterPro"/>
</dbReference>
<dbReference type="GO" id="GO:0006310">
    <property type="term" value="P:DNA recombination"/>
    <property type="evidence" value="ECO:0007669"/>
    <property type="project" value="UniProtKB-UniRule"/>
</dbReference>
<dbReference type="GO" id="GO:0006355">
    <property type="term" value="P:regulation of DNA-templated transcription"/>
    <property type="evidence" value="ECO:0007669"/>
    <property type="project" value="UniProtKB-UniRule"/>
</dbReference>
<dbReference type="GO" id="GO:0006417">
    <property type="term" value="P:regulation of translation"/>
    <property type="evidence" value="ECO:0007669"/>
    <property type="project" value="UniProtKB-UniRule"/>
</dbReference>
<dbReference type="CDD" id="cd13836">
    <property type="entry name" value="IHF_B"/>
    <property type="match status" value="1"/>
</dbReference>
<dbReference type="FunFam" id="4.10.520.10:FF:000003">
    <property type="entry name" value="Integration host factor subunit beta"/>
    <property type="match status" value="1"/>
</dbReference>
<dbReference type="Gene3D" id="4.10.520.10">
    <property type="entry name" value="IHF-like DNA-binding proteins"/>
    <property type="match status" value="1"/>
</dbReference>
<dbReference type="HAMAP" id="MF_00381">
    <property type="entry name" value="IHF_beta"/>
    <property type="match status" value="1"/>
</dbReference>
<dbReference type="InterPro" id="IPR000119">
    <property type="entry name" value="Hist_DNA-bd"/>
</dbReference>
<dbReference type="InterPro" id="IPR020816">
    <property type="entry name" value="Histone-like_DNA-bd_CS"/>
</dbReference>
<dbReference type="InterPro" id="IPR010992">
    <property type="entry name" value="IHF-like_DNA-bd_dom_sf"/>
</dbReference>
<dbReference type="InterPro" id="IPR005685">
    <property type="entry name" value="IHF_beta"/>
</dbReference>
<dbReference type="NCBIfam" id="TIGR00988">
    <property type="entry name" value="hip"/>
    <property type="match status" value="1"/>
</dbReference>
<dbReference type="NCBIfam" id="NF001222">
    <property type="entry name" value="PRK00199.1"/>
    <property type="match status" value="1"/>
</dbReference>
<dbReference type="PANTHER" id="PTHR33175">
    <property type="entry name" value="DNA-BINDING PROTEIN HU"/>
    <property type="match status" value="1"/>
</dbReference>
<dbReference type="PANTHER" id="PTHR33175:SF5">
    <property type="entry name" value="INTEGRATION HOST FACTOR SUBUNIT BETA"/>
    <property type="match status" value="1"/>
</dbReference>
<dbReference type="Pfam" id="PF00216">
    <property type="entry name" value="Bac_DNA_binding"/>
    <property type="match status" value="1"/>
</dbReference>
<dbReference type="PRINTS" id="PR01727">
    <property type="entry name" value="DNABINDINGHU"/>
</dbReference>
<dbReference type="SMART" id="SM00411">
    <property type="entry name" value="BHL"/>
    <property type="match status" value="1"/>
</dbReference>
<dbReference type="SUPFAM" id="SSF47729">
    <property type="entry name" value="IHF-like DNA-binding proteins"/>
    <property type="match status" value="1"/>
</dbReference>
<dbReference type="PROSITE" id="PS00045">
    <property type="entry name" value="HISTONE_LIKE"/>
    <property type="match status" value="1"/>
</dbReference>
<sequence length="94" mass="10651">MTKSELIERLATQQSHIPAKTVEDAVKEMLEHMASTLAQGERIEIRGFGSFSLHYRAPRTGRNPKTGDKVELEGKYVPHFKPGKELRDRANIYG</sequence>